<protein>
    <recommendedName>
        <fullName>Uncharacterized protein YjzB</fullName>
    </recommendedName>
</protein>
<feature type="chain" id="PRO_0000049601" description="Uncharacterized protein YjzB">
    <location>
        <begin position="1"/>
        <end position="79"/>
    </location>
</feature>
<feature type="region of interest" description="Disordered" evidence="1">
    <location>
        <begin position="1"/>
        <end position="37"/>
    </location>
</feature>
<evidence type="ECO:0000256" key="1">
    <source>
        <dbReference type="SAM" id="MobiDB-lite"/>
    </source>
</evidence>
<reference key="1">
    <citation type="journal article" date="1997" name="J. Bacteriol.">
        <title>A new Bacillus subtilis gene, med, encodes a positive regulator of comK.</title>
        <authorList>
            <person name="Ogura M."/>
            <person name="Ohshiro Y."/>
            <person name="Hirao S."/>
            <person name="Tanaka T."/>
        </authorList>
    </citation>
    <scope>NUCLEOTIDE SEQUENCE [GENOMIC DNA]</scope>
    <source>
        <strain>168 / CU741</strain>
    </source>
</reference>
<reference key="2">
    <citation type="journal article" date="1997" name="Nature">
        <title>The complete genome sequence of the Gram-positive bacterium Bacillus subtilis.</title>
        <authorList>
            <person name="Kunst F."/>
            <person name="Ogasawara N."/>
            <person name="Moszer I."/>
            <person name="Albertini A.M."/>
            <person name="Alloni G."/>
            <person name="Azevedo V."/>
            <person name="Bertero M.G."/>
            <person name="Bessieres P."/>
            <person name="Bolotin A."/>
            <person name="Borchert S."/>
            <person name="Borriss R."/>
            <person name="Boursier L."/>
            <person name="Brans A."/>
            <person name="Braun M."/>
            <person name="Brignell S.C."/>
            <person name="Bron S."/>
            <person name="Brouillet S."/>
            <person name="Bruschi C.V."/>
            <person name="Caldwell B."/>
            <person name="Capuano V."/>
            <person name="Carter N.M."/>
            <person name="Choi S.-K."/>
            <person name="Codani J.-J."/>
            <person name="Connerton I.F."/>
            <person name="Cummings N.J."/>
            <person name="Daniel R.A."/>
            <person name="Denizot F."/>
            <person name="Devine K.M."/>
            <person name="Duesterhoeft A."/>
            <person name="Ehrlich S.D."/>
            <person name="Emmerson P.T."/>
            <person name="Entian K.-D."/>
            <person name="Errington J."/>
            <person name="Fabret C."/>
            <person name="Ferrari E."/>
            <person name="Foulger D."/>
            <person name="Fritz C."/>
            <person name="Fujita M."/>
            <person name="Fujita Y."/>
            <person name="Fuma S."/>
            <person name="Galizzi A."/>
            <person name="Galleron N."/>
            <person name="Ghim S.-Y."/>
            <person name="Glaser P."/>
            <person name="Goffeau A."/>
            <person name="Golightly E.J."/>
            <person name="Grandi G."/>
            <person name="Guiseppi G."/>
            <person name="Guy B.J."/>
            <person name="Haga K."/>
            <person name="Haiech J."/>
            <person name="Harwood C.R."/>
            <person name="Henaut A."/>
            <person name="Hilbert H."/>
            <person name="Holsappel S."/>
            <person name="Hosono S."/>
            <person name="Hullo M.-F."/>
            <person name="Itaya M."/>
            <person name="Jones L.-M."/>
            <person name="Joris B."/>
            <person name="Karamata D."/>
            <person name="Kasahara Y."/>
            <person name="Klaerr-Blanchard M."/>
            <person name="Klein C."/>
            <person name="Kobayashi Y."/>
            <person name="Koetter P."/>
            <person name="Koningstein G."/>
            <person name="Krogh S."/>
            <person name="Kumano M."/>
            <person name="Kurita K."/>
            <person name="Lapidus A."/>
            <person name="Lardinois S."/>
            <person name="Lauber J."/>
            <person name="Lazarevic V."/>
            <person name="Lee S.-M."/>
            <person name="Levine A."/>
            <person name="Liu H."/>
            <person name="Masuda S."/>
            <person name="Mauel C."/>
            <person name="Medigue C."/>
            <person name="Medina N."/>
            <person name="Mellado R.P."/>
            <person name="Mizuno M."/>
            <person name="Moestl D."/>
            <person name="Nakai S."/>
            <person name="Noback M."/>
            <person name="Noone D."/>
            <person name="O'Reilly M."/>
            <person name="Ogawa K."/>
            <person name="Ogiwara A."/>
            <person name="Oudega B."/>
            <person name="Park S.-H."/>
            <person name="Parro V."/>
            <person name="Pohl T.M."/>
            <person name="Portetelle D."/>
            <person name="Porwollik S."/>
            <person name="Prescott A.M."/>
            <person name="Presecan E."/>
            <person name="Pujic P."/>
            <person name="Purnelle B."/>
            <person name="Rapoport G."/>
            <person name="Rey M."/>
            <person name="Reynolds S."/>
            <person name="Rieger M."/>
            <person name="Rivolta C."/>
            <person name="Rocha E."/>
            <person name="Roche B."/>
            <person name="Rose M."/>
            <person name="Sadaie Y."/>
            <person name="Sato T."/>
            <person name="Scanlan E."/>
            <person name="Schleich S."/>
            <person name="Schroeter R."/>
            <person name="Scoffone F."/>
            <person name="Sekiguchi J."/>
            <person name="Sekowska A."/>
            <person name="Seror S.J."/>
            <person name="Serror P."/>
            <person name="Shin B.-S."/>
            <person name="Soldo B."/>
            <person name="Sorokin A."/>
            <person name="Tacconi E."/>
            <person name="Takagi T."/>
            <person name="Takahashi H."/>
            <person name="Takemaru K."/>
            <person name="Takeuchi M."/>
            <person name="Tamakoshi A."/>
            <person name="Tanaka T."/>
            <person name="Terpstra P."/>
            <person name="Tognoni A."/>
            <person name="Tosato V."/>
            <person name="Uchiyama S."/>
            <person name="Vandenbol M."/>
            <person name="Vannier F."/>
            <person name="Vassarotti A."/>
            <person name="Viari A."/>
            <person name="Wambutt R."/>
            <person name="Wedler E."/>
            <person name="Wedler H."/>
            <person name="Weitzenegger T."/>
            <person name="Winters P."/>
            <person name="Wipat A."/>
            <person name="Yamamoto H."/>
            <person name="Yamane K."/>
            <person name="Yasumoto K."/>
            <person name="Yata K."/>
            <person name="Yoshida K."/>
            <person name="Yoshikawa H.-F."/>
            <person name="Zumstein E."/>
            <person name="Yoshikawa H."/>
            <person name="Danchin A."/>
        </authorList>
    </citation>
    <scope>NUCLEOTIDE SEQUENCE [LARGE SCALE GENOMIC DNA]</scope>
    <source>
        <strain>168</strain>
    </source>
</reference>
<dbReference type="EMBL" id="D86376">
    <property type="protein sequence ID" value="BAA22930.1"/>
    <property type="molecule type" value="Genomic_DNA"/>
</dbReference>
<dbReference type="EMBL" id="AL009126">
    <property type="protein sequence ID" value="CAB12973.1"/>
    <property type="molecule type" value="Genomic_DNA"/>
</dbReference>
<dbReference type="PIR" id="E69854">
    <property type="entry name" value="E69854"/>
</dbReference>
<dbReference type="RefSeq" id="NP_389014.1">
    <property type="nucleotide sequence ID" value="NC_000964.3"/>
</dbReference>
<dbReference type="RefSeq" id="WP_003232972.1">
    <property type="nucleotide sequence ID" value="NZ_OZ025638.1"/>
</dbReference>
<dbReference type="SMR" id="O34891"/>
<dbReference type="STRING" id="224308.BSU11320"/>
<dbReference type="PaxDb" id="224308-BSU11320"/>
<dbReference type="EnsemblBacteria" id="CAB12973">
    <property type="protein sequence ID" value="CAB12973"/>
    <property type="gene ID" value="BSU_11320"/>
</dbReference>
<dbReference type="GeneID" id="939366"/>
<dbReference type="KEGG" id="bsu:BSU11320"/>
<dbReference type="PATRIC" id="fig|224308.43.peg.1182"/>
<dbReference type="eggNOG" id="ENOG5032MSR">
    <property type="taxonomic scope" value="Bacteria"/>
</dbReference>
<dbReference type="InParanoid" id="O34891"/>
<dbReference type="OrthoDB" id="2697500at2"/>
<dbReference type="BioCyc" id="BSUB:BSU11320-MONOMER"/>
<dbReference type="Proteomes" id="UP000001570">
    <property type="component" value="Chromosome"/>
</dbReference>
<proteinExistence type="predicted"/>
<sequence>MQLDVFSRMMFGDAAKPTEEKEEEQQEEVSQVSQTNDEETINYMHIMDQIGSIMNSLDQIKPALKELAPMLSAIKKKIM</sequence>
<gene>
    <name type="primary">yjzB</name>
    <name type="ordered locus">BSU11320</name>
</gene>
<accession>O34891</accession>
<organism>
    <name type="scientific">Bacillus subtilis (strain 168)</name>
    <dbReference type="NCBI Taxonomy" id="224308"/>
    <lineage>
        <taxon>Bacteria</taxon>
        <taxon>Bacillati</taxon>
        <taxon>Bacillota</taxon>
        <taxon>Bacilli</taxon>
        <taxon>Bacillales</taxon>
        <taxon>Bacillaceae</taxon>
        <taxon>Bacillus</taxon>
    </lineage>
</organism>
<name>YJZB_BACSU</name>
<keyword id="KW-1185">Reference proteome</keyword>